<keyword id="KW-0249">Electron transport</keyword>
<keyword id="KW-0349">Heme</keyword>
<keyword id="KW-0408">Iron</keyword>
<keyword id="KW-0472">Membrane</keyword>
<keyword id="KW-0479">Metal-binding</keyword>
<keyword id="KW-0496">Mitochondrion</keyword>
<keyword id="KW-0999">Mitochondrion inner membrane</keyword>
<keyword id="KW-0679">Respiratory chain</keyword>
<keyword id="KW-0812">Transmembrane</keyword>
<keyword id="KW-1133">Transmembrane helix</keyword>
<keyword id="KW-0813">Transport</keyword>
<keyword id="KW-0830">Ubiquinone</keyword>
<comment type="function">
    <text evidence="2">Component of the ubiquinol-cytochrome c reductase complex (complex III or cytochrome b-c1 complex) that is part of the mitochondrial respiratory chain. The b-c1 complex mediates electron transfer from ubiquinol to cytochrome c. Contributes to the generation of a proton gradient across the mitochondrial membrane that is then used for ATP synthesis.</text>
</comment>
<comment type="cofactor">
    <cofactor evidence="2">
        <name>heme b</name>
        <dbReference type="ChEBI" id="CHEBI:60344"/>
    </cofactor>
    <text evidence="2">Binds 2 heme b groups non-covalently.</text>
</comment>
<comment type="subunit">
    <text evidence="2">The cytochrome bc1 complex contains 11 subunits: 3 respiratory subunits (MT-CYB, CYC1 and UQCRFS1), 2 core proteins (UQCRC1 and UQCRC2) and 6 low-molecular weight proteins (UQCRH/QCR6, UQCRB/QCR7, UQCRQ/QCR8, UQCR10/QCR9, UQCR11/QCR10 and a cleavage product of UQCRFS1). This cytochrome bc1 complex then forms a dimer.</text>
</comment>
<comment type="subcellular location">
    <subcellularLocation>
        <location evidence="2">Mitochondrion inner membrane</location>
        <topology evidence="2">Multi-pass membrane protein</topology>
    </subcellularLocation>
</comment>
<comment type="miscellaneous">
    <text evidence="1">Heme 1 (or BL or b562) is low-potential and absorbs at about 562 nm, and heme 2 (or BH or b566) is high-potential and absorbs at about 566 nm.</text>
</comment>
<comment type="similarity">
    <text evidence="3 4">Belongs to the cytochrome b family.</text>
</comment>
<comment type="caution">
    <text evidence="2">The full-length protein contains only eight transmembrane helices, not nine as predicted by bioinformatics tools.</text>
</comment>
<feature type="chain" id="PRO_0000061561" description="Cytochrome b">
    <location>
        <begin position="1"/>
        <end position="379"/>
    </location>
</feature>
<feature type="transmembrane region" description="Helical" evidence="2">
    <location>
        <begin position="33"/>
        <end position="53"/>
    </location>
</feature>
<feature type="transmembrane region" description="Helical" evidence="2">
    <location>
        <begin position="77"/>
        <end position="98"/>
    </location>
</feature>
<feature type="transmembrane region" description="Helical" evidence="2">
    <location>
        <begin position="113"/>
        <end position="133"/>
    </location>
</feature>
<feature type="transmembrane region" description="Helical" evidence="2">
    <location>
        <begin position="178"/>
        <end position="198"/>
    </location>
</feature>
<feature type="transmembrane region" description="Helical" evidence="2">
    <location>
        <begin position="226"/>
        <end position="246"/>
    </location>
</feature>
<feature type="transmembrane region" description="Helical" evidence="2">
    <location>
        <begin position="288"/>
        <end position="308"/>
    </location>
</feature>
<feature type="transmembrane region" description="Helical" evidence="2">
    <location>
        <begin position="320"/>
        <end position="340"/>
    </location>
</feature>
<feature type="transmembrane region" description="Helical" evidence="2">
    <location>
        <begin position="347"/>
        <end position="367"/>
    </location>
</feature>
<feature type="binding site" description="axial binding residue" evidence="2">
    <location>
        <position position="83"/>
    </location>
    <ligand>
        <name>heme b</name>
        <dbReference type="ChEBI" id="CHEBI:60344"/>
        <label>b562</label>
    </ligand>
    <ligandPart>
        <name>Fe</name>
        <dbReference type="ChEBI" id="CHEBI:18248"/>
    </ligandPart>
</feature>
<feature type="binding site" description="axial binding residue" evidence="2">
    <location>
        <position position="97"/>
    </location>
    <ligand>
        <name>heme b</name>
        <dbReference type="ChEBI" id="CHEBI:60344"/>
        <label>b566</label>
    </ligand>
    <ligandPart>
        <name>Fe</name>
        <dbReference type="ChEBI" id="CHEBI:18248"/>
    </ligandPart>
</feature>
<feature type="binding site" description="axial binding residue" evidence="2">
    <location>
        <position position="182"/>
    </location>
    <ligand>
        <name>heme b</name>
        <dbReference type="ChEBI" id="CHEBI:60344"/>
        <label>b562</label>
    </ligand>
    <ligandPart>
        <name>Fe</name>
        <dbReference type="ChEBI" id="CHEBI:18248"/>
    </ligandPart>
</feature>
<feature type="binding site" description="axial binding residue" evidence="2">
    <location>
        <position position="196"/>
    </location>
    <ligand>
        <name>heme b</name>
        <dbReference type="ChEBI" id="CHEBI:60344"/>
        <label>b566</label>
    </ligand>
    <ligandPart>
        <name>Fe</name>
        <dbReference type="ChEBI" id="CHEBI:18248"/>
    </ligandPart>
</feature>
<feature type="binding site" evidence="2">
    <location>
        <position position="201"/>
    </location>
    <ligand>
        <name>a ubiquinone</name>
        <dbReference type="ChEBI" id="CHEBI:16389"/>
    </ligand>
</feature>
<feature type="sequence variant" description="In strain: Isolate 94SAK2.">
    <original>I</original>
    <variation>V</variation>
    <location>
        <position position="98"/>
    </location>
</feature>
<proteinExistence type="inferred from homology"/>
<sequence>MTNLRKTHPLMKIVNSSFIDLPAPSNISSWWNFGSLLGVCLIIQILTGLFLAMHYTSDTMTAFSSVTHICRDVNYGWLIRYLHANGASMFFICLFLHIGRGLYYGSYMYLETWNIGVLLLFAVMATAFMGYVLPWGQMSFWGATVITNLLSAIPYIGSDLVEWIWGGFSVDKATLTRFFAFHFILPFIIAALAGVHLLFLHETGSNNPSGLSSDADKIPFHPYYTIKDILGVLLLILVLMSLVLFSPDLLGDPDNYTPANPLNTPPHIKPEWYFLFAYAILRSIPNKLGGVLALALSILVLAVVPFLHTSKQRSMMFRPFSQCLFWILVADLLTLTWIGGQPVEHPFVIIGQLASILYFLLILVIMPITSLFENNLLKW</sequence>
<protein>
    <recommendedName>
        <fullName>Cytochrome b</fullName>
    </recommendedName>
    <alternativeName>
        <fullName>Complex III subunit 3</fullName>
    </alternativeName>
    <alternativeName>
        <fullName>Complex III subunit III</fullName>
    </alternativeName>
    <alternativeName>
        <fullName>Cytochrome b-c1 complex subunit 3</fullName>
    </alternativeName>
    <alternativeName>
        <fullName>Ubiquinol-cytochrome-c reductase complex cytochrome b subunit</fullName>
    </alternativeName>
</protein>
<organism>
    <name type="scientific">Sorex gracillimus</name>
    <name type="common">Slender shrew</name>
    <dbReference type="NCBI Taxonomy" id="62273"/>
    <lineage>
        <taxon>Eukaryota</taxon>
        <taxon>Metazoa</taxon>
        <taxon>Chordata</taxon>
        <taxon>Craniata</taxon>
        <taxon>Vertebrata</taxon>
        <taxon>Euteleostomi</taxon>
        <taxon>Mammalia</taxon>
        <taxon>Eutheria</taxon>
        <taxon>Laurasiatheria</taxon>
        <taxon>Eulipotyphla</taxon>
        <taxon>Soricidae</taxon>
        <taxon>Soricinae</taxon>
        <taxon>Sorex</taxon>
    </lineage>
</organism>
<dbReference type="EMBL" id="AB175131">
    <property type="protein sequence ID" value="BAE92696.1"/>
    <property type="molecule type" value="Genomic_DNA"/>
</dbReference>
<dbReference type="EMBL" id="D85343">
    <property type="protein sequence ID" value="BAA21336.1"/>
    <property type="molecule type" value="Genomic_DNA"/>
</dbReference>
<dbReference type="EMBL" id="D85346">
    <property type="protein sequence ID" value="BAA21339.1"/>
    <property type="molecule type" value="Genomic_DNA"/>
</dbReference>
<dbReference type="EMBL" id="D85348">
    <property type="protein sequence ID" value="BAA21341.1"/>
    <property type="molecule type" value="Genomic_DNA"/>
</dbReference>
<dbReference type="SMR" id="O21804"/>
<dbReference type="GO" id="GO:0005743">
    <property type="term" value="C:mitochondrial inner membrane"/>
    <property type="evidence" value="ECO:0007669"/>
    <property type="project" value="UniProtKB-SubCell"/>
</dbReference>
<dbReference type="GO" id="GO:0045275">
    <property type="term" value="C:respiratory chain complex III"/>
    <property type="evidence" value="ECO:0007669"/>
    <property type="project" value="InterPro"/>
</dbReference>
<dbReference type="GO" id="GO:0046872">
    <property type="term" value="F:metal ion binding"/>
    <property type="evidence" value="ECO:0007669"/>
    <property type="project" value="UniProtKB-KW"/>
</dbReference>
<dbReference type="GO" id="GO:0008121">
    <property type="term" value="F:ubiquinol-cytochrome-c reductase activity"/>
    <property type="evidence" value="ECO:0007669"/>
    <property type="project" value="InterPro"/>
</dbReference>
<dbReference type="GO" id="GO:0006122">
    <property type="term" value="P:mitochondrial electron transport, ubiquinol to cytochrome c"/>
    <property type="evidence" value="ECO:0007669"/>
    <property type="project" value="TreeGrafter"/>
</dbReference>
<dbReference type="CDD" id="cd00290">
    <property type="entry name" value="cytochrome_b_C"/>
    <property type="match status" value="1"/>
</dbReference>
<dbReference type="CDD" id="cd00284">
    <property type="entry name" value="Cytochrome_b_N"/>
    <property type="match status" value="1"/>
</dbReference>
<dbReference type="FunFam" id="1.20.810.10:FF:000002">
    <property type="entry name" value="Cytochrome b"/>
    <property type="match status" value="1"/>
</dbReference>
<dbReference type="Gene3D" id="1.20.810.10">
    <property type="entry name" value="Cytochrome Bc1 Complex, Chain C"/>
    <property type="match status" value="1"/>
</dbReference>
<dbReference type="InterPro" id="IPR005798">
    <property type="entry name" value="Cyt_b/b6_C"/>
</dbReference>
<dbReference type="InterPro" id="IPR036150">
    <property type="entry name" value="Cyt_b/b6_C_sf"/>
</dbReference>
<dbReference type="InterPro" id="IPR005797">
    <property type="entry name" value="Cyt_b/b6_N"/>
</dbReference>
<dbReference type="InterPro" id="IPR027387">
    <property type="entry name" value="Cytb/b6-like_sf"/>
</dbReference>
<dbReference type="InterPro" id="IPR030689">
    <property type="entry name" value="Cytochrome_b"/>
</dbReference>
<dbReference type="InterPro" id="IPR048260">
    <property type="entry name" value="Cytochrome_b_C_euk/bac"/>
</dbReference>
<dbReference type="InterPro" id="IPR048259">
    <property type="entry name" value="Cytochrome_b_N_euk/bac"/>
</dbReference>
<dbReference type="InterPro" id="IPR016174">
    <property type="entry name" value="Di-haem_cyt_TM"/>
</dbReference>
<dbReference type="PANTHER" id="PTHR19271">
    <property type="entry name" value="CYTOCHROME B"/>
    <property type="match status" value="1"/>
</dbReference>
<dbReference type="PANTHER" id="PTHR19271:SF16">
    <property type="entry name" value="CYTOCHROME B"/>
    <property type="match status" value="1"/>
</dbReference>
<dbReference type="Pfam" id="PF00032">
    <property type="entry name" value="Cytochrom_B_C"/>
    <property type="match status" value="1"/>
</dbReference>
<dbReference type="Pfam" id="PF00033">
    <property type="entry name" value="Cytochrome_B"/>
    <property type="match status" value="1"/>
</dbReference>
<dbReference type="PIRSF" id="PIRSF038885">
    <property type="entry name" value="COB"/>
    <property type="match status" value="1"/>
</dbReference>
<dbReference type="SUPFAM" id="SSF81648">
    <property type="entry name" value="a domain/subunit of cytochrome bc1 complex (Ubiquinol-cytochrome c reductase)"/>
    <property type="match status" value="1"/>
</dbReference>
<dbReference type="SUPFAM" id="SSF81342">
    <property type="entry name" value="Transmembrane di-heme cytochromes"/>
    <property type="match status" value="1"/>
</dbReference>
<dbReference type="PROSITE" id="PS51003">
    <property type="entry name" value="CYTB_CTER"/>
    <property type="match status" value="1"/>
</dbReference>
<dbReference type="PROSITE" id="PS51002">
    <property type="entry name" value="CYTB_NTER"/>
    <property type="match status" value="1"/>
</dbReference>
<accession>O21804</accession>
<accession>O21413</accession>
<accession>Q1XIK0</accession>
<geneLocation type="mitochondrion"/>
<gene>
    <name type="primary">MT-CYB</name>
    <name type="synonym">COB</name>
    <name type="synonym">CYTB</name>
    <name type="synonym">MTCYB</name>
</gene>
<reference key="1">
    <citation type="submission" date="2004-03" db="EMBL/GenBank/DDBJ databases">
        <title>Molecular phylogenetics of the Soricidae (Insectivora, Mammalia) based on mitochondrial cytochrome b gene sequences.</title>
        <authorList>
            <person name="Ohdachi S.D."/>
            <person name="Iwasa M.A."/>
            <person name="Abe H."/>
            <person name="Vogel P."/>
            <person name="Oshida T."/>
            <person name="Lin L.K."/>
            <person name="Hasegawa M."/>
        </authorList>
    </citation>
    <scope>NUCLEOTIDE SEQUENCE [GENOMIC DNA]</scope>
    <source>
        <strain>Isolate SO-2002/9/18-1</strain>
        <tissue>Liver</tissue>
    </source>
</reference>
<reference key="2">
    <citation type="journal article" date="1997" name="Zool. Sci.">
        <title>Molecular phylogeny from nucleotide sequences of the mitochondrial cytochrome b gene and evolutionary history of Eurasian soricine shrews (Mammalia, Insectivora).</title>
        <authorList>
            <person name="Ohdachi S."/>
            <person name="Masuda R."/>
            <person name="Abe H."/>
            <person name="Adachi J."/>
            <person name="Dokuchaev N.E."/>
            <person name="Haukisalmi V."/>
            <person name="Yoshida M.C."/>
        </authorList>
    </citation>
    <scope>NUCLEOTIDE SEQUENCE [GENOMIC DNA] OF 1-134</scope>
    <source>
        <strain>Isolate 94SAK2</strain>
        <strain>Isolate 94SG1</strain>
        <tissue>Muscle</tissue>
    </source>
</reference>
<name>CYB_SORGR</name>
<evidence type="ECO:0000250" key="1"/>
<evidence type="ECO:0000250" key="2">
    <source>
        <dbReference type="UniProtKB" id="P00157"/>
    </source>
</evidence>
<evidence type="ECO:0000255" key="3">
    <source>
        <dbReference type="PROSITE-ProRule" id="PRU00967"/>
    </source>
</evidence>
<evidence type="ECO:0000255" key="4">
    <source>
        <dbReference type="PROSITE-ProRule" id="PRU00968"/>
    </source>
</evidence>